<feature type="chain" id="PRO_0000086821" description="Serine/threonine-protein kinase WNK1">
    <location>
        <begin position="1"/>
        <end position="2126"/>
    </location>
</feature>
<feature type="domain" description="Protein kinase" evidence="4">
    <location>
        <begin position="221"/>
        <end position="479"/>
    </location>
</feature>
<feature type="region of interest" description="Disordered" evidence="5">
    <location>
        <begin position="1"/>
        <end position="80"/>
    </location>
</feature>
<feature type="region of interest" description="Disordered" evidence="5">
    <location>
        <begin position="93"/>
        <end position="202"/>
    </location>
</feature>
<feature type="region of interest" description="Autoinhibitory domain" evidence="7">
    <location>
        <begin position="488"/>
        <end position="555"/>
    </location>
</feature>
<feature type="region of interest" description="Disordered" evidence="5">
    <location>
        <begin position="573"/>
        <end position="865"/>
    </location>
</feature>
<feature type="region of interest" description="Interaction with KLHL3" evidence="2">
    <location>
        <begin position="629"/>
        <end position="639"/>
    </location>
</feature>
<feature type="region of interest" description="Disordered" evidence="5">
    <location>
        <begin position="1474"/>
        <end position="1507"/>
    </location>
</feature>
<feature type="region of interest" description="Disordered" evidence="5">
    <location>
        <begin position="1557"/>
        <end position="1595"/>
    </location>
</feature>
<feature type="region of interest" description="Disordered" evidence="5">
    <location>
        <begin position="1610"/>
        <end position="1695"/>
    </location>
</feature>
<feature type="region of interest" description="Disordered" evidence="5">
    <location>
        <begin position="1709"/>
        <end position="1783"/>
    </location>
</feature>
<feature type="region of interest" description="Disordered" evidence="5">
    <location>
        <begin position="1856"/>
        <end position="1940"/>
    </location>
</feature>
<feature type="region of interest" description="Disordered" evidence="5">
    <location>
        <begin position="1952"/>
        <end position="1990"/>
    </location>
</feature>
<feature type="region of interest" description="Amphipathic alpha-helix" evidence="3">
    <location>
        <begin position="1985"/>
        <end position="2005"/>
    </location>
</feature>
<feature type="region of interest" description="Disordered" evidence="5">
    <location>
        <begin position="2076"/>
        <end position="2097"/>
    </location>
</feature>
<feature type="short sequence motif" description="RFXV motif 1" evidence="3">
    <location>
        <begin position="1003"/>
        <end position="1006"/>
    </location>
</feature>
<feature type="short sequence motif" description="RFXV motif 2" evidence="3">
    <location>
        <begin position="1604"/>
        <end position="1607"/>
    </location>
</feature>
<feature type="short sequence motif" description="RFXV motif 3" evidence="3">
    <location>
        <begin position="1690"/>
        <end position="1693"/>
    </location>
</feature>
<feature type="short sequence motif" description="RFXV motif 4" evidence="3">
    <location>
        <begin position="1702"/>
        <end position="1705"/>
    </location>
</feature>
<feature type="compositionally biased region" description="Basic and acidic residues" evidence="5">
    <location>
        <begin position="48"/>
        <end position="64"/>
    </location>
</feature>
<feature type="compositionally biased region" description="Low complexity" evidence="5">
    <location>
        <begin position="101"/>
        <end position="111"/>
    </location>
</feature>
<feature type="compositionally biased region" description="Low complexity" evidence="5">
    <location>
        <begin position="127"/>
        <end position="141"/>
    </location>
</feature>
<feature type="compositionally biased region" description="Basic and acidic residues" evidence="5">
    <location>
        <begin position="573"/>
        <end position="588"/>
    </location>
</feature>
<feature type="compositionally biased region" description="Polar residues" evidence="5">
    <location>
        <begin position="593"/>
        <end position="614"/>
    </location>
</feature>
<feature type="compositionally biased region" description="Low complexity" evidence="5">
    <location>
        <begin position="615"/>
        <end position="626"/>
    </location>
</feature>
<feature type="compositionally biased region" description="Polar residues" evidence="5">
    <location>
        <begin position="638"/>
        <end position="682"/>
    </location>
</feature>
<feature type="compositionally biased region" description="Polar residues" evidence="5">
    <location>
        <begin position="695"/>
        <end position="705"/>
    </location>
</feature>
<feature type="compositionally biased region" description="Polar residues" evidence="5">
    <location>
        <begin position="713"/>
        <end position="733"/>
    </location>
</feature>
<feature type="compositionally biased region" description="Low complexity" evidence="5">
    <location>
        <begin position="734"/>
        <end position="746"/>
    </location>
</feature>
<feature type="compositionally biased region" description="Polar residues" evidence="5">
    <location>
        <begin position="750"/>
        <end position="789"/>
    </location>
</feature>
<feature type="compositionally biased region" description="Low complexity" evidence="5">
    <location>
        <begin position="793"/>
        <end position="823"/>
    </location>
</feature>
<feature type="compositionally biased region" description="Polar residues" evidence="5">
    <location>
        <begin position="826"/>
        <end position="836"/>
    </location>
</feature>
<feature type="compositionally biased region" description="Basic residues" evidence="5">
    <location>
        <begin position="844"/>
        <end position="865"/>
    </location>
</feature>
<feature type="compositionally biased region" description="Low complexity" evidence="5">
    <location>
        <begin position="1477"/>
        <end position="1496"/>
    </location>
</feature>
<feature type="compositionally biased region" description="Polar residues" evidence="5">
    <location>
        <begin position="1567"/>
        <end position="1583"/>
    </location>
</feature>
<feature type="compositionally biased region" description="Basic and acidic residues" evidence="5">
    <location>
        <begin position="1613"/>
        <end position="1629"/>
    </location>
</feature>
<feature type="compositionally biased region" description="Low complexity" evidence="5">
    <location>
        <begin position="1632"/>
        <end position="1650"/>
    </location>
</feature>
<feature type="compositionally biased region" description="Basic and acidic residues" evidence="5">
    <location>
        <begin position="1709"/>
        <end position="1719"/>
    </location>
</feature>
<feature type="compositionally biased region" description="Basic and acidic residues" evidence="5">
    <location>
        <begin position="1738"/>
        <end position="1747"/>
    </location>
</feature>
<feature type="compositionally biased region" description="Basic residues" evidence="5">
    <location>
        <begin position="1866"/>
        <end position="1878"/>
    </location>
</feature>
<feature type="compositionally biased region" description="Low complexity" evidence="5">
    <location>
        <begin position="1879"/>
        <end position="1889"/>
    </location>
</feature>
<feature type="compositionally biased region" description="Polar residues" evidence="5">
    <location>
        <begin position="1890"/>
        <end position="1940"/>
    </location>
</feature>
<feature type="compositionally biased region" description="Low complexity" evidence="5">
    <location>
        <begin position="1957"/>
        <end position="1981"/>
    </location>
</feature>
<feature type="active site" description="Proton acceptor" evidence="26 28">
    <location>
        <position position="368"/>
    </location>
</feature>
<feature type="binding site" evidence="3">
    <location>
        <position position="231"/>
    </location>
    <ligand>
        <name>ATP</name>
        <dbReference type="ChEBI" id="CHEBI:30616"/>
    </ligand>
</feature>
<feature type="binding site" evidence="29 32">
    <location>
        <position position="283"/>
    </location>
    <ligand>
        <name>chloride</name>
        <dbReference type="ChEBI" id="CHEBI:17996"/>
    </ligand>
</feature>
<feature type="binding site" evidence="29 32">
    <location>
        <position position="299"/>
    </location>
    <ligand>
        <name>chloride</name>
        <dbReference type="ChEBI" id="CHEBI:17996"/>
    </ligand>
</feature>
<feature type="binding site" evidence="3">
    <location>
        <begin position="301"/>
        <end position="304"/>
    </location>
    <ligand>
        <name>ATP</name>
        <dbReference type="ChEBI" id="CHEBI:30616"/>
    </ligand>
</feature>
<feature type="binding site" evidence="3">
    <location>
        <position position="351"/>
    </location>
    <ligand>
        <name>ATP</name>
        <dbReference type="ChEBI" id="CHEBI:30616"/>
    </ligand>
</feature>
<feature type="binding site" evidence="29 32">
    <location>
        <position position="369"/>
    </location>
    <ligand>
        <name>chloride</name>
        <dbReference type="ChEBI" id="CHEBI:17996"/>
    </ligand>
</feature>
<feature type="binding site" evidence="29 32">
    <location>
        <position position="371"/>
    </location>
    <ligand>
        <name>chloride</name>
        <dbReference type="ChEBI" id="CHEBI:17996"/>
    </ligand>
</feature>
<feature type="modified residue" description="Phosphoserine" evidence="3">
    <location>
        <position position="17"/>
    </location>
</feature>
<feature type="modified residue" description="Phosphothreonine" evidence="10">
    <location>
        <position position="58"/>
    </location>
</feature>
<feature type="modified residue" description="Phosphoserine" evidence="33">
    <location>
        <position position="165"/>
    </location>
</feature>
<feature type="modified residue" description="Phosphoserine" evidence="33">
    <location>
        <position position="172"/>
    </location>
</feature>
<feature type="modified residue" description="Phosphoserine; by autocatalysis" evidence="7">
    <location>
        <position position="378"/>
    </location>
</feature>
<feature type="modified residue" description="Phosphoserine; by autocatalysis" evidence="7 17">
    <location>
        <position position="382"/>
    </location>
</feature>
<feature type="modified residue" description="Phosphoserine" evidence="3">
    <location>
        <position position="1007"/>
    </location>
</feature>
<feature type="modified residue" description="Phosphoserine" evidence="3">
    <location>
        <position position="1723"/>
    </location>
</feature>
<feature type="modified residue" description="Phosphoserine" evidence="3">
    <location>
        <position position="1755"/>
    </location>
</feature>
<feature type="modified residue" description="Phosphoserine" evidence="3">
    <location>
        <position position="1756"/>
    </location>
</feature>
<feature type="modified residue" description="Phosphoserine" evidence="3">
    <location>
        <position position="1771"/>
    </location>
</feature>
<feature type="modified residue" description="Phosphoserine" evidence="33">
    <location>
        <position position="1773"/>
    </location>
</feature>
<feature type="modified residue" description="Phosphoserine" evidence="33">
    <location>
        <position position="1776"/>
    </location>
</feature>
<feature type="modified residue" description="Phosphoserine" evidence="3">
    <location>
        <position position="1865"/>
    </location>
</feature>
<feature type="modified residue" description="Phosphoserine" evidence="1">
    <location>
        <position position="2014"/>
    </location>
</feature>
<feature type="modified residue" description="Phosphoserine" evidence="1">
    <location>
        <position position="2030"/>
    </location>
</feature>
<feature type="modified residue" description="Phosphoserine" evidence="3">
    <location>
        <position position="2114"/>
    </location>
</feature>
<feature type="modified residue" description="Phosphoserine" evidence="3">
    <location>
        <position position="2116"/>
    </location>
</feature>
<feature type="splice variant" id="VSP_058594" description="In isoform 4.">
    <original>MSDGTAEKQSGTPGFLSPPAPVPKNGSSSDSSVGEKLGAAVADSGIGRTEEYRRRRHTMDKDSRGAAATTTPTEHRFFRRSVICDSNATALELPGLPLSIPQPSVPAVVPQSAPPEPHREETLTATVASQVSQQPSAAASPGEQAVVGSATATVPSSTSKDRPVSQPSLVGSKEEPPPSRSGSGSGGASAKEPQEERNQQQDDIEELETKAVGMSNDGRFLKFDIEIGRGSFKTVYKGLDTETTVEVAWCELQDRKLTKSERQRFKEEAEMLKGLQHPNIVRFYDSWESTVKGKKCIVLVTELMTSGTLKTYLKRFKVMKIKVLRSWCRQILKGLQFLHTRTPPIIHRDLKCDNIFITGPTGSVKIGDLGLATLKRASFAKSVIGTPEFMAPEMYEEKYDESVDVYAFGMCMLEMATSEYPYSECQNAAQIYRRVTS</original>
    <variation>MVVCISIYFPPSFFLNSIKSVLPFLMDFLKKDFCSVFVIVNSHCCCCSQKDCINE</variation>
    <location>
        <begin position="1"/>
        <end position="437"/>
    </location>
</feature>
<feature type="splice variant" id="VSP_058595" description="In isoform 5.">
    <original>MSDGTAEKQSGTPGFLSPPAPVPKNGSSSDSSVGEKLGAAVADSGIGRTEEYRRRRHTMDKDSRGAAATTTPTEHRFFRRSVICDSNATALELPGLPLSIPQPSVPAVVPQSAPPEPHREETLTATVASQVSQQPSAAASPGEQAVVGSATATVPSSTSKDRPVSQPSLVGSKEEPPPSRSGSGSGGASAKEPQEERNQQQDDIEELETKAVGMSNDGRFLKFDIEIGRGSFKTVYKGLDTETTVEVAWCELQDRKLTKSERQRFKEEAEMLKGLQHPNIVRFYDSWESTVKGKKCIVLVTELMTSGTLKTYLKRFKVMKIKVLRSWCRQILKGLQFLHTRTPPIIHRDLKCDNIFITGPTGSVKIGDLGLATLKRASFAKSVIGTPEFMAPEMYEEKYDESVDVYAFGMCMLEMATSEYPYSECQNAAQIYRRVTS</original>
    <variation>MDFLKKDFCSVFVIVNSHCCCCSQKDCINE</variation>
    <location>
        <begin position="1"/>
        <end position="437"/>
    </location>
</feature>
<feature type="splice variant" id="VSP_058596" description="In isoform 4 and isoform 5.">
    <location>
        <begin position="543"/>
        <end position="2126"/>
    </location>
</feature>
<feature type="splice variant" id="VSP_040279" description="In isoform 2." evidence="25">
    <original>M</original>
    <variation>MPRRGRSMSVCVPHLSAVPSLSRISPSAPSTPPPVLSAPLCPSLLRSAPEETFAEKLSKALESVLPMHSASQRKHRRSSLPSLFVTTPQSVAHPCGGTPTYPESQIFFPTIHERPVSFSPPPTCPPKVAISQRRKSTSFLEAQTRHFQPLLRTVGQNHLPPGGSPTNWTPEAIVMLGTTANRVNRELCEMQVQPVFETTQIYSDYRPGLVLAEEAHYFIPQETVYLAGVHYQAHAAGQYEGISYNSPVLSSPMKQITEQKPVPGCPASSSVFEFPSGQAFLVGHLQNLRLDSGPSPASPLSSISAPNSTDATHLKFHPVFVPHSAPAVLTHSNENRSNCVFEFHAQTPSSSSGEGGGILPQRVYRNRQVAVDSSQEELSPQSVGLHCHLQPVTEEQRNNHTPELTISVVEPMGQNWPVGSPEYSSDSSQITSSDISDFQSPPPTGGTAAPFGSDVSLPYIRLPQTVLQESPLFFCFPQGTTSQQVLSASYSSGGSALHPQ</variation>
    <location>
        <position position="714"/>
    </location>
</feature>
<feature type="splice variant" id="VSP_040278" description="In isoform 3." evidence="25">
    <original>M</original>
    <variation>MPQSVAHPCGGTPTYPESQIFFPTIHERPVSFSPPPTCPPKVAISQRRKSTSFLEAQTRHFQPLLRTVGQNHLPPGGSPTNWTPEAIVMLGTTANRVNRELCEMQVQPVFETTQIYSDYRPGLVLAEEAHYFIPQETVYLAGVHYQAHAAGQYEGISYNSPVLSSPMKQITEQKPVPGCPASSSVFEFPSGQAFLVGHLQNLRLDSGPSPASPLSSISAPNSTDATHLKFHPVFVPHSAPAVLTHSNENRSNCVFEFHAQTPSSSSGEGGGILPQRVYRNRQVAVDSSQEELSPQSVGLHCHLQPVTEEQRNNHTPELTISVVEPMGQNWPVGSPEYSSDSSQITSSDISDFQSPPPTGGTAAPFGSDVSLPYIRLPQTVLQESPLFFCFPQGTTSQQVLSASYSSGGSALHPQ</variation>
    <location>
        <position position="714"/>
    </location>
</feature>
<feature type="splice variant" id="VSP_040280" description="In isoform 3." evidence="25">
    <original>Q</original>
    <variation>QGFPSRLPPQYPGDSNIAPSSNVASVCIHSTVLAPPPMPTEALATQGYFPTVVQPYVESTPLVPMGSVGGQVQVSQPAVSLSQQPPTTSSQQAVLE</variation>
    <location>
        <position position="782"/>
    </location>
</feature>
<feature type="mutagenesis site" description="Decreased ability to activate SGK1." evidence="10">
    <original>T</original>
    <variation>A</variation>
    <location>
        <position position="58"/>
    </location>
</feature>
<feature type="mutagenesis site" description="Loss of kinase activity; when associated with K-250. Abolished serine/threonine-protein kinase activity without affecting ability to regulate localization of TRPV4." evidence="6 7 13">
    <original>K</original>
    <variation>G</variation>
    <location>
        <position position="233"/>
    </location>
</feature>
<feature type="mutagenesis site" description="Loss of kinase activity." evidence="6 7">
    <original>K</original>
    <variation>M</variation>
    <location>
        <position position="233"/>
    </location>
</feature>
<feature type="mutagenesis site" description="No effect on kinase activity." evidence="6 7">
    <original>C</original>
    <variation>A</variation>
    <location>
        <position position="250"/>
    </location>
</feature>
<feature type="mutagenesis site" description="Reduced kinase activity. Loss of kinase activity; when associated with G-233." evidence="6 7">
    <original>C</original>
    <variation>K</variation>
    <location>
        <position position="250"/>
    </location>
</feature>
<feature type="mutagenesis site" description="No effect on kinase activity." evidence="6">
    <original>K</original>
    <variation>M</variation>
    <location>
        <position position="256"/>
    </location>
</feature>
<feature type="mutagenesis site" description="No effect on kinase activity." evidence="6">
    <original>K</original>
    <variation>M</variation>
    <location>
        <position position="259"/>
    </location>
</feature>
<feature type="mutagenesis site" description="Decreased inhibition by Cl(-) ions." evidence="18">
    <original>L</original>
    <variation>F</variation>
    <location>
        <position position="299"/>
    </location>
</feature>
<feature type="mutagenesis site" description="Loss of kinase activity." evidence="6 11">
    <original>D</original>
    <variation>A</variation>
    <location>
        <position position="368"/>
    </location>
</feature>
<feature type="mutagenesis site" description="Decreased inhibition by Cl(-) ions." evidence="18">
    <original>L</original>
    <variation>F</variation>
    <location>
        <position position="369"/>
    </location>
</feature>
<feature type="mutagenesis site" description="Decreased inhibition by Cl(-) ions." evidence="18">
    <original>L</original>
    <variation>F</variation>
    <location>
        <position position="371"/>
    </location>
</feature>
<feature type="mutagenesis site" description="Reduced kinase activity." evidence="7">
    <original>S</original>
    <variation>A</variation>
    <location>
        <position position="378"/>
    </location>
</feature>
<feature type="mutagenesis site" description="Increased kinase activity." evidence="7">
    <original>S</original>
    <variation>D</variation>
    <location>
        <position position="378"/>
    </location>
</feature>
<feature type="mutagenesis site" description="Impaired autophosphorylation and subsequent activation. Does not affect ability to regulate localization of TRPV4." evidence="7 13">
    <original>S</original>
    <variation>A</variation>
    <location>
        <position position="382"/>
    </location>
</feature>
<feature type="mutagenesis site" description="Mimics phosphorylation; Increased kinase activity." evidence="7 17">
    <original>S</original>
    <variation>D</variation>
    <variation>E</variation>
    <location>
        <position position="382"/>
    </location>
</feature>
<feature type="mutagenesis site" description="Reduced ability of autoinhibitory domain to regulate kinase activity." evidence="7">
    <original>F</original>
    <variation>A</variation>
    <location>
        <position position="524"/>
    </location>
</feature>
<feature type="mutagenesis site" description="Reduced ability of autoinhibitory domain to regulate kinase activity." evidence="7">
    <original>F</original>
    <variation>A</variation>
    <location>
        <position position="526"/>
    </location>
</feature>
<feature type="mutagenesis site" description="In MidCC(mut); decreased ability to undergo liquid-liquid phase separation (LLPS) for the formation of a cytoplasmic membraneless compartment." evidence="21">
    <original>KREQRQLVREEQEKRKQEESSFKQQNEQQASV</original>
    <variation>PREQRQLPREEQEKRKQEESSPKQPNEQPASP</variation>
    <location>
        <begin position="568"/>
        <end position="599"/>
    </location>
</feature>
<feature type="mutagenesis site" description="In CC(mut); decreased ability to undergo liquid-liquid phase separation (LLPS) for the formation of a cytoplasmic membraneless compartment." evidence="21">
    <original>LRRLREKHLKEIQDLQSRQ</original>
    <variation>PRRLREKPLKEPQDPQSRP</variation>
    <location>
        <begin position="1820"/>
        <end position="1838"/>
    </location>
</feature>
<feature type="sequence conflict" description="In Ref. 1; AAF74258." evidence="25" ref="1">
    <original>S</original>
    <variation>F</variation>
    <location>
        <position position="1179"/>
    </location>
</feature>
<feature type="sequence conflict" description="In Ref. 1; AAF74258." evidence="25" ref="1">
    <original>V</original>
    <variation>I</variation>
    <location>
        <position position="1950"/>
    </location>
</feature>
<feature type="sequence conflict" description="In Ref. 1; AAF74258." evidence="25" ref="1">
    <original>G</original>
    <variation>S</variation>
    <location>
        <position position="2120"/>
    </location>
</feature>
<feature type="strand" evidence="35">
    <location>
        <begin position="211"/>
        <end position="214"/>
    </location>
</feature>
<feature type="strand" evidence="35">
    <location>
        <begin position="220"/>
        <end position="229"/>
    </location>
</feature>
<feature type="strand" evidence="35">
    <location>
        <begin position="231"/>
        <end position="240"/>
    </location>
</feature>
<feature type="turn" evidence="35">
    <location>
        <begin position="241"/>
        <end position="243"/>
    </location>
</feature>
<feature type="strand" evidence="35">
    <location>
        <begin position="246"/>
        <end position="252"/>
    </location>
</feature>
<feature type="helix" evidence="37">
    <location>
        <begin position="254"/>
        <end position="256"/>
    </location>
</feature>
<feature type="helix" evidence="35">
    <location>
        <begin position="259"/>
        <end position="273"/>
    </location>
</feature>
<feature type="strand" evidence="35">
    <location>
        <begin position="283"/>
        <end position="291"/>
    </location>
</feature>
<feature type="strand" evidence="35">
    <location>
        <begin position="294"/>
        <end position="302"/>
    </location>
</feature>
<feature type="helix" evidence="35">
    <location>
        <begin position="309"/>
        <end position="316"/>
    </location>
</feature>
<feature type="helix" evidence="35">
    <location>
        <begin position="321"/>
        <end position="339"/>
    </location>
</feature>
<feature type="strand" evidence="35">
    <location>
        <begin position="341"/>
        <end position="343"/>
    </location>
</feature>
<feature type="strand" evidence="35">
    <location>
        <begin position="354"/>
        <end position="359"/>
    </location>
</feature>
<feature type="strand" evidence="35">
    <location>
        <begin position="364"/>
        <end position="366"/>
    </location>
</feature>
<feature type="helix" evidence="35">
    <location>
        <begin position="371"/>
        <end position="374"/>
    </location>
</feature>
<feature type="strand" evidence="35">
    <location>
        <begin position="377"/>
        <end position="379"/>
    </location>
</feature>
<feature type="helix" evidence="36">
    <location>
        <begin position="387"/>
        <end position="389"/>
    </location>
</feature>
<feature type="helix" evidence="35">
    <location>
        <begin position="392"/>
        <end position="396"/>
    </location>
</feature>
<feature type="helix" evidence="35">
    <location>
        <begin position="402"/>
        <end position="417"/>
    </location>
</feature>
<feature type="turn" evidence="35">
    <location>
        <begin position="421"/>
        <end position="424"/>
    </location>
</feature>
<feature type="helix" evidence="35">
    <location>
        <begin position="428"/>
        <end position="435"/>
    </location>
</feature>
<feature type="turn" evidence="35">
    <location>
        <begin position="436"/>
        <end position="438"/>
    </location>
</feature>
<feature type="helix" evidence="35">
    <location>
        <begin position="442"/>
        <end position="446"/>
    </location>
</feature>
<feature type="helix" evidence="35">
    <location>
        <begin position="450"/>
        <end position="459"/>
    </location>
</feature>
<feature type="helix" evidence="35">
    <location>
        <begin position="464"/>
        <end position="466"/>
    </location>
</feature>
<feature type="helix" evidence="35">
    <location>
        <begin position="470"/>
        <end position="474"/>
    </location>
</feature>
<feature type="helix" evidence="35">
    <location>
        <begin position="477"/>
        <end position="479"/>
    </location>
</feature>
<feature type="strand" evidence="34">
    <location>
        <begin position="484"/>
        <end position="491"/>
    </location>
</feature>
<feature type="strand" evidence="34">
    <location>
        <begin position="498"/>
        <end position="507"/>
    </location>
</feature>
<feature type="strand" evidence="34">
    <location>
        <begin position="511"/>
        <end position="515"/>
    </location>
</feature>
<feature type="strand" evidence="34">
    <location>
        <begin position="521"/>
        <end position="527"/>
    </location>
</feature>
<feature type="turn" evidence="34">
    <location>
        <begin position="528"/>
        <end position="530"/>
    </location>
</feature>
<feature type="helix" evidence="34">
    <location>
        <begin position="533"/>
        <end position="542"/>
    </location>
</feature>
<feature type="helix" evidence="34">
    <location>
        <begin position="548"/>
        <end position="550"/>
    </location>
</feature>
<feature type="helix" evidence="34">
    <location>
        <begin position="551"/>
        <end position="568"/>
    </location>
</feature>
<evidence type="ECO:0000250" key="1">
    <source>
        <dbReference type="UniProtKB" id="P83741"/>
    </source>
</evidence>
<evidence type="ECO:0000250" key="2">
    <source>
        <dbReference type="UniProtKB" id="Q96J92"/>
    </source>
</evidence>
<evidence type="ECO:0000250" key="3">
    <source>
        <dbReference type="UniProtKB" id="Q9H4A3"/>
    </source>
</evidence>
<evidence type="ECO:0000255" key="4">
    <source>
        <dbReference type="PROSITE-ProRule" id="PRU00159"/>
    </source>
</evidence>
<evidence type="ECO:0000256" key="5">
    <source>
        <dbReference type="SAM" id="MobiDB-lite"/>
    </source>
</evidence>
<evidence type="ECO:0000269" key="6">
    <source>
    </source>
</evidence>
<evidence type="ECO:0000269" key="7">
    <source>
    </source>
</evidence>
<evidence type="ECO:0000269" key="8">
    <source>
    </source>
</evidence>
<evidence type="ECO:0000269" key="9">
    <source>
    </source>
</evidence>
<evidence type="ECO:0000269" key="10">
    <source>
    </source>
</evidence>
<evidence type="ECO:0000269" key="11">
    <source>
    </source>
</evidence>
<evidence type="ECO:0000269" key="12">
    <source>
    </source>
</evidence>
<evidence type="ECO:0000269" key="13">
    <source>
    </source>
</evidence>
<evidence type="ECO:0000269" key="14">
    <source>
    </source>
</evidence>
<evidence type="ECO:0000269" key="15">
    <source>
    </source>
</evidence>
<evidence type="ECO:0000269" key="16">
    <source>
    </source>
</evidence>
<evidence type="ECO:0000269" key="17">
    <source>
    </source>
</evidence>
<evidence type="ECO:0000269" key="18">
    <source>
    </source>
</evidence>
<evidence type="ECO:0000269" key="19">
    <source>
    </source>
</evidence>
<evidence type="ECO:0000269" key="20">
    <source>
    </source>
</evidence>
<evidence type="ECO:0000269" key="21">
    <source>
    </source>
</evidence>
<evidence type="ECO:0000303" key="22">
    <source>
    </source>
</evidence>
<evidence type="ECO:0000303" key="23">
    <source>
    </source>
</evidence>
<evidence type="ECO:0000303" key="24">
    <source>
    </source>
</evidence>
<evidence type="ECO:0000305" key="25"/>
<evidence type="ECO:0000305" key="26">
    <source>
    </source>
</evidence>
<evidence type="ECO:0000305" key="27">
    <source>
    </source>
</evidence>
<evidence type="ECO:0000305" key="28">
    <source>
    </source>
</evidence>
<evidence type="ECO:0000305" key="29">
    <source>
    </source>
</evidence>
<evidence type="ECO:0000312" key="30">
    <source>
        <dbReference type="EMBL" id="AAF74258.1"/>
    </source>
</evidence>
<evidence type="ECO:0000312" key="31">
    <source>
        <dbReference type="RGD" id="621141"/>
    </source>
</evidence>
<evidence type="ECO:0007744" key="32">
    <source>
        <dbReference type="PDB" id="4Q2A"/>
    </source>
</evidence>
<evidence type="ECO:0007744" key="33">
    <source>
    </source>
</evidence>
<evidence type="ECO:0007829" key="34">
    <source>
        <dbReference type="PDB" id="2LRU"/>
    </source>
</evidence>
<evidence type="ECO:0007829" key="35">
    <source>
        <dbReference type="PDB" id="5DRB"/>
    </source>
</evidence>
<evidence type="ECO:0007829" key="36">
    <source>
        <dbReference type="PDB" id="5W7T"/>
    </source>
</evidence>
<evidence type="ECO:0007829" key="37">
    <source>
        <dbReference type="PDB" id="6CN9"/>
    </source>
</evidence>
<dbReference type="EC" id="2.7.11.1" evidence="6 7 8 11"/>
<dbReference type="EMBL" id="AF227741">
    <property type="protein sequence ID" value="AAF74258.1"/>
    <property type="molecule type" value="mRNA"/>
</dbReference>
<dbReference type="EMBL" id="DQ177457">
    <property type="protein sequence ID" value="ABA02202.1"/>
    <property type="molecule type" value="mRNA"/>
</dbReference>
<dbReference type="EMBL" id="AC106348">
    <property type="status" value="NOT_ANNOTATED_CDS"/>
    <property type="molecule type" value="Genomic_DNA"/>
</dbReference>
<dbReference type="EMBL" id="BK004106">
    <property type="protein sequence ID" value="DAA04492.1"/>
    <property type="status" value="ALT_SEQ"/>
    <property type="molecule type" value="Genomic_DNA"/>
</dbReference>
<dbReference type="RefSeq" id="NP_001002823.2">
    <molecule id="Q9JIH7-2"/>
    <property type="nucleotide sequence ID" value="NM_001002823.2"/>
</dbReference>
<dbReference type="RefSeq" id="NP_001186024.1">
    <molecule id="Q9JIH7-3"/>
    <property type="nucleotide sequence ID" value="NM_001199095.1"/>
</dbReference>
<dbReference type="RefSeq" id="NP_446246.2">
    <molecule id="Q9JIH7-1"/>
    <property type="nucleotide sequence ID" value="NM_053794.2"/>
</dbReference>
<dbReference type="PDB" id="2LRU">
    <property type="method" value="NMR"/>
    <property type="chains" value="A=480-572"/>
</dbReference>
<dbReference type="PDB" id="4Q2A">
    <property type="method" value="X-ray"/>
    <property type="resolution" value="3.50 A"/>
    <property type="chains" value="A=194-480"/>
</dbReference>
<dbReference type="PDB" id="5DRB">
    <property type="method" value="X-ray"/>
    <property type="resolution" value="1.65 A"/>
    <property type="chains" value="A=194-483"/>
</dbReference>
<dbReference type="PDB" id="5W7T">
    <property type="method" value="X-ray"/>
    <property type="resolution" value="2.01 A"/>
    <property type="chains" value="A/B=210-482"/>
</dbReference>
<dbReference type="PDB" id="6CN9">
    <property type="method" value="X-ray"/>
    <property type="resolution" value="1.80 A"/>
    <property type="chains" value="A/B=194-483"/>
</dbReference>
<dbReference type="PDB" id="6OL2">
    <property type="method" value="X-ray"/>
    <property type="resolution" value="2.10 A"/>
    <property type="chains" value="A=194-483"/>
</dbReference>
<dbReference type="PDB" id="7UOS">
    <property type="method" value="X-ray"/>
    <property type="resolution" value="2.90 A"/>
    <property type="chains" value="A=194-483"/>
</dbReference>
<dbReference type="PDB" id="9D3F">
    <property type="method" value="X-ray"/>
    <property type="resolution" value="2.00 A"/>
    <property type="chains" value="A=194-483"/>
</dbReference>
<dbReference type="PDBsum" id="2LRU"/>
<dbReference type="PDBsum" id="4Q2A"/>
<dbReference type="PDBsum" id="5DRB"/>
<dbReference type="PDBsum" id="5W7T"/>
<dbReference type="PDBsum" id="6CN9"/>
<dbReference type="PDBsum" id="6OL2"/>
<dbReference type="PDBsum" id="7UOS"/>
<dbReference type="PDBsum" id="9D3F"/>
<dbReference type="BMRB" id="Q9JIH7"/>
<dbReference type="SMR" id="Q9JIH7"/>
<dbReference type="FunCoup" id="Q9JIH7">
    <property type="interactions" value="2856"/>
</dbReference>
<dbReference type="IntAct" id="Q9JIH7">
    <property type="interactions" value="6"/>
</dbReference>
<dbReference type="STRING" id="10116.ENSRNOP00000013355"/>
<dbReference type="CarbonylDB" id="Q9JIH7"/>
<dbReference type="GlyGen" id="Q9JIH7">
    <property type="glycosylation" value="5 sites, 1 O-linked glycan (1 site)"/>
</dbReference>
<dbReference type="iPTMnet" id="Q9JIH7"/>
<dbReference type="PhosphoSitePlus" id="Q9JIH7"/>
<dbReference type="jPOST" id="Q9JIH7"/>
<dbReference type="ABCD" id="Q9JIH7">
    <property type="antibodies" value="1 sequenced antibody"/>
</dbReference>
<dbReference type="Ensembl" id="ENSRNOT00000013355.7">
    <molecule id="Q9JIH7-2"/>
    <property type="protein sequence ID" value="ENSRNOP00000013355.5"/>
    <property type="gene ID" value="ENSRNOG00000009956.9"/>
</dbReference>
<dbReference type="Ensembl" id="ENSRNOT00000013621.7">
    <molecule id="Q9JIH7-3"/>
    <property type="protein sequence ID" value="ENSRNOP00000013622.5"/>
    <property type="gene ID" value="ENSRNOG00000009956.9"/>
</dbReference>
<dbReference type="GeneID" id="116477"/>
<dbReference type="KEGG" id="rno:116477"/>
<dbReference type="UCSC" id="RGD:621141">
    <molecule id="Q9JIH7-1"/>
    <property type="organism name" value="rat"/>
</dbReference>
<dbReference type="AGR" id="RGD:621141"/>
<dbReference type="CTD" id="65125"/>
<dbReference type="RGD" id="621141">
    <property type="gene designation" value="Wnk1"/>
</dbReference>
<dbReference type="VEuPathDB" id="HostDB:ENSRNOG00000009956"/>
<dbReference type="eggNOG" id="KOG0584">
    <property type="taxonomic scope" value="Eukaryota"/>
</dbReference>
<dbReference type="GeneTree" id="ENSGT00940000155474"/>
<dbReference type="HOGENOM" id="CLU_000550_0_1_1"/>
<dbReference type="InParanoid" id="Q9JIH7"/>
<dbReference type="PhylomeDB" id="Q9JIH7"/>
<dbReference type="EvolutionaryTrace" id="Q9JIH7"/>
<dbReference type="PRO" id="PR:Q9JIH7"/>
<dbReference type="Proteomes" id="UP000002494">
    <property type="component" value="Chromosome 4"/>
</dbReference>
<dbReference type="Bgee" id="ENSRNOG00000009956">
    <property type="expression patterns" value="Expressed in Ammon's horn and 20 other cell types or tissues"/>
</dbReference>
<dbReference type="ExpressionAtlas" id="Q9JIH7">
    <property type="expression patterns" value="baseline and differential"/>
</dbReference>
<dbReference type="GO" id="GO:0005737">
    <property type="term" value="C:cytoplasm"/>
    <property type="evidence" value="ECO:0000314"/>
    <property type="project" value="UniProtKB"/>
</dbReference>
<dbReference type="GO" id="GO:0005829">
    <property type="term" value="C:cytosol"/>
    <property type="evidence" value="ECO:0000314"/>
    <property type="project" value="ParkinsonsUK-UCL"/>
</dbReference>
<dbReference type="GO" id="GO:0098982">
    <property type="term" value="C:GABA-ergic synapse"/>
    <property type="evidence" value="ECO:0000314"/>
    <property type="project" value="SynGO"/>
</dbReference>
<dbReference type="GO" id="GO:0043232">
    <property type="term" value="C:intracellular membraneless organelle"/>
    <property type="evidence" value="ECO:0000314"/>
    <property type="project" value="UniProtKB"/>
</dbReference>
<dbReference type="GO" id="GO:0016020">
    <property type="term" value="C:membrane"/>
    <property type="evidence" value="ECO:0000314"/>
    <property type="project" value="ParkinsonsUK-UCL"/>
</dbReference>
<dbReference type="GO" id="GO:0072686">
    <property type="term" value="C:mitotic spindle"/>
    <property type="evidence" value="ECO:0000250"/>
    <property type="project" value="UniProtKB"/>
</dbReference>
<dbReference type="GO" id="GO:0005634">
    <property type="term" value="C:nucleus"/>
    <property type="evidence" value="ECO:0000250"/>
    <property type="project" value="UniProtKB"/>
</dbReference>
<dbReference type="GO" id="GO:0032991">
    <property type="term" value="C:protein-containing complex"/>
    <property type="evidence" value="ECO:0000266"/>
    <property type="project" value="RGD"/>
</dbReference>
<dbReference type="GO" id="GO:0005524">
    <property type="term" value="F:ATP binding"/>
    <property type="evidence" value="ECO:0000314"/>
    <property type="project" value="UniProtKB"/>
</dbReference>
<dbReference type="GO" id="GO:0000287">
    <property type="term" value="F:magnesium ion binding"/>
    <property type="evidence" value="ECO:0000315"/>
    <property type="project" value="RGD"/>
</dbReference>
<dbReference type="GO" id="GO:0140693">
    <property type="term" value="F:molecular condensate scaffold activity"/>
    <property type="evidence" value="ECO:0000314"/>
    <property type="project" value="UniProtKB"/>
</dbReference>
<dbReference type="GO" id="GO:0019902">
    <property type="term" value="F:phosphatase binding"/>
    <property type="evidence" value="ECO:0000250"/>
    <property type="project" value="UniProtKB"/>
</dbReference>
<dbReference type="GO" id="GO:0019870">
    <property type="term" value="F:potassium channel inhibitor activity"/>
    <property type="evidence" value="ECO:0000314"/>
    <property type="project" value="RGD"/>
</dbReference>
<dbReference type="GO" id="GO:0030295">
    <property type="term" value="F:protein kinase activator activity"/>
    <property type="evidence" value="ECO:0000266"/>
    <property type="project" value="RGD"/>
</dbReference>
<dbReference type="GO" id="GO:0004672">
    <property type="term" value="F:protein kinase activity"/>
    <property type="evidence" value="ECO:0000266"/>
    <property type="project" value="RGD"/>
</dbReference>
<dbReference type="GO" id="GO:0019901">
    <property type="term" value="F:protein kinase binding"/>
    <property type="evidence" value="ECO:0000353"/>
    <property type="project" value="RGD"/>
</dbReference>
<dbReference type="GO" id="GO:0106310">
    <property type="term" value="F:protein serine kinase activity"/>
    <property type="evidence" value="ECO:0007669"/>
    <property type="project" value="RHEA"/>
</dbReference>
<dbReference type="GO" id="GO:0004674">
    <property type="term" value="F:protein serine/threonine kinase activity"/>
    <property type="evidence" value="ECO:0000314"/>
    <property type="project" value="UniProtKB"/>
</dbReference>
<dbReference type="GO" id="GO:0030291">
    <property type="term" value="F:protein serine/threonine kinase inhibitor activity"/>
    <property type="evidence" value="ECO:0000314"/>
    <property type="project" value="RGD"/>
</dbReference>
<dbReference type="GO" id="GO:0006884">
    <property type="term" value="P:cell volume homeostasis"/>
    <property type="evidence" value="ECO:0000314"/>
    <property type="project" value="UniProtKB"/>
</dbReference>
<dbReference type="GO" id="GO:0071474">
    <property type="term" value="P:cellular hyperosmotic response"/>
    <property type="evidence" value="ECO:0000314"/>
    <property type="project" value="UniProtKB"/>
</dbReference>
<dbReference type="GO" id="GO:0071277">
    <property type="term" value="P:cellular response to calcium ion"/>
    <property type="evidence" value="ECO:0000314"/>
    <property type="project" value="UniProtKB"/>
</dbReference>
<dbReference type="GO" id="GO:1990869">
    <property type="term" value="P:cellular response to chemokine"/>
    <property type="evidence" value="ECO:0000266"/>
    <property type="project" value="RGD"/>
</dbReference>
<dbReference type="GO" id="GO:0038116">
    <property type="term" value="P:chemokine (C-C motif) ligand 21 signaling pathway"/>
    <property type="evidence" value="ECO:0000266"/>
    <property type="project" value="RGD"/>
</dbReference>
<dbReference type="GO" id="GO:0007507">
    <property type="term" value="P:heart development"/>
    <property type="evidence" value="ECO:0000266"/>
    <property type="project" value="RGD"/>
</dbReference>
<dbReference type="GO" id="GO:0030644">
    <property type="term" value="P:intracellular chloride ion homeostasis"/>
    <property type="evidence" value="ECO:0000266"/>
    <property type="project" value="RGD"/>
</dbReference>
<dbReference type="GO" id="GO:0035556">
    <property type="term" value="P:intracellular signal transduction"/>
    <property type="evidence" value="ECO:0000314"/>
    <property type="project" value="UniProtKB"/>
</dbReference>
<dbReference type="GO" id="GO:0097022">
    <property type="term" value="P:lymphocyte migration into lymph node"/>
    <property type="evidence" value="ECO:0000266"/>
    <property type="project" value="RGD"/>
</dbReference>
<dbReference type="GO" id="GO:0140694">
    <property type="term" value="P:membraneless organelle assembly"/>
    <property type="evidence" value="ECO:0000250"/>
    <property type="project" value="UniProtKB"/>
</dbReference>
<dbReference type="GO" id="GO:0050804">
    <property type="term" value="P:modulation of chemical synaptic transmission"/>
    <property type="evidence" value="ECO:0000314"/>
    <property type="project" value="SynGO"/>
</dbReference>
<dbReference type="GO" id="GO:0055080">
    <property type="term" value="P:monoatomic cation homeostasis"/>
    <property type="evidence" value="ECO:0000250"/>
    <property type="project" value="UniProtKB"/>
</dbReference>
<dbReference type="GO" id="GO:0050801">
    <property type="term" value="P:monoatomic ion homeostasis"/>
    <property type="evidence" value="ECO:0000318"/>
    <property type="project" value="GO_Central"/>
</dbReference>
<dbReference type="GO" id="GO:0006811">
    <property type="term" value="P:monoatomic ion transport"/>
    <property type="evidence" value="ECO:0000250"/>
    <property type="project" value="UniProtKB"/>
</dbReference>
<dbReference type="GO" id="GO:0010507">
    <property type="term" value="P:negative regulation of autophagy"/>
    <property type="evidence" value="ECO:0000250"/>
    <property type="project" value="UniProtKB"/>
</dbReference>
<dbReference type="GO" id="GO:0033633">
    <property type="term" value="P:negative regulation of cell-cell adhesion mediated by integrin"/>
    <property type="evidence" value="ECO:0000266"/>
    <property type="project" value="RGD"/>
</dbReference>
<dbReference type="GO" id="GO:0034115">
    <property type="term" value="P:negative regulation of heterotypic cell-cell adhesion"/>
    <property type="evidence" value="ECO:0000266"/>
    <property type="project" value="RGD"/>
</dbReference>
<dbReference type="GO" id="GO:1903038">
    <property type="term" value="P:negative regulation of leukocyte cell-cell adhesion"/>
    <property type="evidence" value="ECO:0000266"/>
    <property type="project" value="RGD"/>
</dbReference>
<dbReference type="GO" id="GO:0090188">
    <property type="term" value="P:negative regulation of pancreatic juice secretion"/>
    <property type="evidence" value="ECO:0000266"/>
    <property type="project" value="RGD"/>
</dbReference>
<dbReference type="GO" id="GO:1903077">
    <property type="term" value="P:negative regulation of protein localization to plasma membrane"/>
    <property type="evidence" value="ECO:0000314"/>
    <property type="project" value="UniProtKB"/>
</dbReference>
<dbReference type="GO" id="GO:0031397">
    <property type="term" value="P:negative regulation of protein ubiquitination"/>
    <property type="evidence" value="ECO:0000250"/>
    <property type="project" value="UniProtKB"/>
</dbReference>
<dbReference type="GO" id="GO:0051058">
    <property type="term" value="P:negative regulation of small GTPase mediated signal transduction"/>
    <property type="evidence" value="ECO:0000266"/>
    <property type="project" value="RGD"/>
</dbReference>
<dbReference type="GO" id="GO:0010766">
    <property type="term" value="P:negative regulation of sodium ion transport"/>
    <property type="evidence" value="ECO:0000314"/>
    <property type="project" value="UniProtKB"/>
</dbReference>
<dbReference type="GO" id="GO:0045766">
    <property type="term" value="P:positive regulation of angiogenesis"/>
    <property type="evidence" value="ECO:0000250"/>
    <property type="project" value="UniProtKB"/>
</dbReference>
<dbReference type="GO" id="GO:0090263">
    <property type="term" value="P:positive regulation of canonical Wnt signaling pathway"/>
    <property type="evidence" value="ECO:0000266"/>
    <property type="project" value="RGD"/>
</dbReference>
<dbReference type="GO" id="GO:1903490">
    <property type="term" value="P:positive regulation of mitotic cytokinesis"/>
    <property type="evidence" value="ECO:0000250"/>
    <property type="project" value="UniProtKB"/>
</dbReference>
<dbReference type="GO" id="GO:1903288">
    <property type="term" value="P:positive regulation of potassium ion import across plasma membrane"/>
    <property type="evidence" value="ECO:0000318"/>
    <property type="project" value="GO_Central"/>
</dbReference>
<dbReference type="GO" id="GO:0003084">
    <property type="term" value="P:positive regulation of systemic arterial blood pressure"/>
    <property type="evidence" value="ECO:0000266"/>
    <property type="project" value="RGD"/>
</dbReference>
<dbReference type="GO" id="GO:0010820">
    <property type="term" value="P:positive regulation of T cell chemotaxis"/>
    <property type="evidence" value="ECO:0000266"/>
    <property type="project" value="RGD"/>
</dbReference>
<dbReference type="GO" id="GO:1904595">
    <property type="term" value="P:positive regulation of termination of RNA polymerase II transcription"/>
    <property type="evidence" value="ECO:0000250"/>
    <property type="project" value="UniProtKB"/>
</dbReference>
<dbReference type="GO" id="GO:0055075">
    <property type="term" value="P:potassium ion homeostasis"/>
    <property type="evidence" value="ECO:0000266"/>
    <property type="project" value="RGD"/>
</dbReference>
<dbReference type="GO" id="GO:0045050">
    <property type="term" value="P:protein insertion into ER membrane by stop-transfer membrane-anchor sequence"/>
    <property type="evidence" value="ECO:0000250"/>
    <property type="project" value="UniProtKB"/>
</dbReference>
<dbReference type="GO" id="GO:0006468">
    <property type="term" value="P:protein phosphorylation"/>
    <property type="evidence" value="ECO:0000314"/>
    <property type="project" value="UniProtKB"/>
</dbReference>
<dbReference type="GO" id="GO:0008217">
    <property type="term" value="P:regulation of blood pressure"/>
    <property type="evidence" value="ECO:0000266"/>
    <property type="project" value="RGD"/>
</dbReference>
<dbReference type="GO" id="GO:1904062">
    <property type="term" value="P:regulation of monoatomic cation transmembrane transport"/>
    <property type="evidence" value="ECO:0000266"/>
    <property type="project" value="RGD"/>
</dbReference>
<dbReference type="GO" id="GO:0010793">
    <property type="term" value="P:regulation of mRNA export from nucleus"/>
    <property type="evidence" value="ECO:0000250"/>
    <property type="project" value="UniProtKB"/>
</dbReference>
<dbReference type="GO" id="GO:1902305">
    <property type="term" value="P:regulation of sodium ion transmembrane transport"/>
    <property type="evidence" value="ECO:0000266"/>
    <property type="project" value="RGD"/>
</dbReference>
<dbReference type="GO" id="GO:0002028">
    <property type="term" value="P:regulation of sodium ion transport"/>
    <property type="evidence" value="ECO:0000314"/>
    <property type="project" value="UniProtKB"/>
</dbReference>
<dbReference type="GO" id="GO:0007165">
    <property type="term" value="P:signal transduction"/>
    <property type="evidence" value="ECO:0000266"/>
    <property type="project" value="RGD"/>
</dbReference>
<dbReference type="GO" id="GO:0035725">
    <property type="term" value="P:sodium ion transmembrane transport"/>
    <property type="evidence" value="ECO:0000266"/>
    <property type="project" value="RGD"/>
</dbReference>
<dbReference type="GO" id="GO:0050852">
    <property type="term" value="P:T cell receptor signaling pathway"/>
    <property type="evidence" value="ECO:0000266"/>
    <property type="project" value="RGD"/>
</dbReference>
<dbReference type="CDD" id="cd14030">
    <property type="entry name" value="STKc_WNK1"/>
    <property type="match status" value="1"/>
</dbReference>
<dbReference type="FunFam" id="3.10.20.90:FF:000007">
    <property type="entry name" value="Serine/threonine-protein kinase WNK1 isoform 1"/>
    <property type="match status" value="1"/>
</dbReference>
<dbReference type="FunFam" id="1.10.510.10:FF:000006">
    <property type="entry name" value="Serine/threonine-protein kinase WNK1 isoform 2"/>
    <property type="match status" value="1"/>
</dbReference>
<dbReference type="FunFam" id="3.10.20.90:FF:000012">
    <property type="entry name" value="Serine/threonine-protein kinase WNK1 isoform 2"/>
    <property type="match status" value="1"/>
</dbReference>
<dbReference type="FunFam" id="3.30.200.20:FF:000494">
    <property type="entry name" value="serine/threonine-protein kinase WNK2 isoform X2"/>
    <property type="match status" value="1"/>
</dbReference>
<dbReference type="Gene3D" id="3.10.20.90">
    <property type="entry name" value="Phosphatidylinositol 3-kinase Catalytic Subunit, Chain A, domain 1"/>
    <property type="match status" value="2"/>
</dbReference>
<dbReference type="Gene3D" id="3.30.200.20">
    <property type="entry name" value="Phosphorylase Kinase, domain 1"/>
    <property type="match status" value="1"/>
</dbReference>
<dbReference type="Gene3D" id="1.10.510.10">
    <property type="entry name" value="Transferase(Phosphotransferase) domain 1"/>
    <property type="match status" value="1"/>
</dbReference>
<dbReference type="InterPro" id="IPR056865">
    <property type="entry name" value="CCTL2_WNK"/>
</dbReference>
<dbReference type="InterPro" id="IPR011009">
    <property type="entry name" value="Kinase-like_dom_sf"/>
</dbReference>
<dbReference type="InterPro" id="IPR024678">
    <property type="entry name" value="Kinase_OSR1/WNK_CCT"/>
</dbReference>
<dbReference type="InterPro" id="IPR000719">
    <property type="entry name" value="Prot_kinase_dom"/>
</dbReference>
<dbReference type="InterPro" id="IPR008271">
    <property type="entry name" value="Ser/Thr_kinase_AS"/>
</dbReference>
<dbReference type="InterPro" id="IPR050588">
    <property type="entry name" value="WNK_Ser-Thr_kinase"/>
</dbReference>
<dbReference type="PANTHER" id="PTHR13902">
    <property type="entry name" value="SERINE/THREONINE-PROTEIN KINASE WNK WITH NO LYSINE -RELATED"/>
    <property type="match status" value="1"/>
</dbReference>
<dbReference type="Pfam" id="PF24889">
    <property type="entry name" value="CCTL2_WNK"/>
    <property type="match status" value="1"/>
</dbReference>
<dbReference type="Pfam" id="PF12202">
    <property type="entry name" value="OSR1_C"/>
    <property type="match status" value="1"/>
</dbReference>
<dbReference type="Pfam" id="PF00069">
    <property type="entry name" value="Pkinase"/>
    <property type="match status" value="1"/>
</dbReference>
<dbReference type="SMART" id="SM00220">
    <property type="entry name" value="S_TKc"/>
    <property type="match status" value="1"/>
</dbReference>
<dbReference type="SUPFAM" id="SSF56112">
    <property type="entry name" value="Protein kinase-like (PK-like)"/>
    <property type="match status" value="1"/>
</dbReference>
<dbReference type="PROSITE" id="PS50011">
    <property type="entry name" value="PROTEIN_KINASE_DOM"/>
    <property type="match status" value="1"/>
</dbReference>
<dbReference type="PROSITE" id="PS00108">
    <property type="entry name" value="PROTEIN_KINASE_ST"/>
    <property type="match status" value="1"/>
</dbReference>
<accession>Q9JIH7</accession>
<accession>Q3S2I2</accession>
<accession>Q6IFS7</accession>
<organism evidence="30">
    <name type="scientific">Rattus norvegicus</name>
    <name type="common">Rat</name>
    <dbReference type="NCBI Taxonomy" id="10116"/>
    <lineage>
        <taxon>Eukaryota</taxon>
        <taxon>Metazoa</taxon>
        <taxon>Chordata</taxon>
        <taxon>Craniata</taxon>
        <taxon>Vertebrata</taxon>
        <taxon>Euteleostomi</taxon>
        <taxon>Mammalia</taxon>
        <taxon>Eutheria</taxon>
        <taxon>Euarchontoglires</taxon>
        <taxon>Glires</taxon>
        <taxon>Rodentia</taxon>
        <taxon>Myomorpha</taxon>
        <taxon>Muroidea</taxon>
        <taxon>Muridae</taxon>
        <taxon>Murinae</taxon>
        <taxon>Rattus</taxon>
    </lineage>
</organism>
<name>WNK1_RAT</name>
<keyword id="KW-0002">3D-structure</keyword>
<keyword id="KW-0025">Alternative splicing</keyword>
<keyword id="KW-0067">ATP-binding</keyword>
<keyword id="KW-0868">Chloride</keyword>
<keyword id="KW-0963">Cytoplasm</keyword>
<keyword id="KW-0206">Cytoskeleton</keyword>
<keyword id="KW-0418">Kinase</keyword>
<keyword id="KW-0547">Nucleotide-binding</keyword>
<keyword id="KW-0539">Nucleus</keyword>
<keyword id="KW-0597">Phosphoprotein</keyword>
<keyword id="KW-1185">Reference proteome</keyword>
<keyword id="KW-0723">Serine/threonine-protein kinase</keyword>
<keyword id="KW-0808">Transferase</keyword>
<keyword id="KW-0832">Ubl conjugation</keyword>
<proteinExistence type="evidence at protein level"/>
<gene>
    <name evidence="22 31" type="primary">Wnk1</name>
    <name evidence="23" type="synonym">Hsn2</name>
    <name type="synonym">Prkwnk1</name>
</gene>
<protein>
    <recommendedName>
        <fullName evidence="25">Serine/threonine-protein kinase WNK1</fullName>
        <ecNumber evidence="6 7 8 11">2.7.11.1</ecNumber>
    </recommendedName>
    <alternativeName>
        <fullName evidence="31">Protein kinase lysine-deficient 1</fullName>
    </alternativeName>
    <alternativeName>
        <fullName evidence="22">Protein kinase with no lysine 1</fullName>
    </alternativeName>
</protein>
<comment type="function">
    <text evidence="1 3 6 7 8 9 10 11 13 14 15 16 17 18 21">Serine/threonine-protein kinase component of the WNK1-SPAK/OSR1 kinase cascade, which acts as a key regulator of blood pressure and regulatory volume increase by promoting ion influx (PubMed:10828064, PubMed:12374799, PubMed:16083423, PubMed:17975670, PubMed:24803536, PubMed:36318922). WNK1 mediates regulatory volume increase in response to hyperosmotic stress by acting as a molecular crowding sensor, which senses cell shrinkage and mediates formation of a membraneless compartment by undergoing liquid-liquid phase separation (PubMed:36318922). The membraneless compartment concentrates WNK1 with its substrates, OXSR1/OSR1 and STK39/SPAK, promoting WNK1-dependent phosphorylation and activation of downstream kinases OXSR1/OSR1 and STK39/SPAK (PubMed:16083423, PubMed:36318922). Following activation, OXSR1/OSR1 and STK39/SPAK catalyze phosphorylation of ion cotransporters SLC12A1/NKCC2, SLC12A2/NKCC1, SLC12A5/KCC2 and SLC12A6/KCC3, regulating their activity (PubMed:22544747, PubMed:36318922). Phosphorylation of Na-K-Cl cotransporters SLC12A2/NKCC1 and SLC12A2/NKCC1 promote their activation and ion influx; simultaneously, phosphorylation of K-Cl cotransporters SLC12A5/KCC2 and SLC12A6/KCC3 inhibit their activity, blocking ion efflux (PubMed:36318922). Also acts as a regulator of angiogenesis in endothelial cells (By similarity). Also acts independently of the WNK1-SPAK/OSR1 kinase cascade by catalyzing phosphorylation of other substrates, such as SYT2, PCF11 and NEDD4L (PubMed:15350218, PubMed:20525693). Mediates phosphorylation of SYT2, regulating SYT2 association with phospholipids and membrane-binding (PubMed:15350218). Regulates mRNA export in the nucleus by mediating phosphorylation of PCF11, thereby decreasing the association between PCF11 and POLR2A/RNA polymerase II and promoting mRNA export to the cytoplasm (By similarity). Acts as a negative regulator of autophagy (By similarity). Required for the abscission step during mitosis, independently of the WNK1-SPAK/OSR1 kinase cascade (By similarity). WNK1 may also play a role in actin cytoskeletal reorganization (By similarity). Also acts as a scaffold protein independently of its protein kinase activity: negatively regulates cell membrane localization of various transporters and channels, such as SLC4A4, SLC26A6, SLC26A9, TRPV4 and CFTR (PubMed:16403833, PubMed:17673510). Involved in the regulation of epithelial Na(+) channel (ENaC) by promoting activation of SGK1 in a kinase-independent manner (PubMed:16006511, PubMed:16081417). Probably activates SGK1 by acting as a scaffold protein that promotes the recruitment of SGK1 to the mTORC2 complex in response to chloride, leading to mTORC2-dependent phosphorylation and activation of SGK1 (By similarity). Acts as an assembly factor for the ER membrane protein complex independently of its protein kinase activity: associates with EMC2 in the cytoplasm via its amphipathic alpha-helix, and prevents EMC2 ubiquitination and subsequent degradation, thereby promoting EMC2 stabilization (By similarity).</text>
</comment>
<comment type="function">
    <molecule>Isoform 5</molecule>
    <text evidence="12">Kinase-defective isoform specifically expressed in kidney, which acts as a dominant-negative regulator of the longer isoform 1 (PubMed:16204408). Does not directly inhibit WNK4 and has no direct effect on sodium and chloride ion transport (PubMed:16204408). Down-regulates sodium-chloride cotransporter activity indirectly by inhibiting isoform 1, it associates with isoform 1 and attenuates its kinase activity (PubMed:16204408). In kidney, may play an important role regulating sodium and potassium balance (PubMed:16204408).</text>
</comment>
<comment type="function">
    <molecule>Isoform 4</molecule>
    <text evidence="12">Kinase-defective isoform produced by alternative promoter usage and alternative splicing.</text>
</comment>
<comment type="catalytic activity">
    <reaction evidence="6 7 18">
        <text>L-seryl-[protein] + ATP = O-phospho-L-seryl-[protein] + ADP + H(+)</text>
        <dbReference type="Rhea" id="RHEA:17989"/>
        <dbReference type="Rhea" id="RHEA-COMP:9863"/>
        <dbReference type="Rhea" id="RHEA-COMP:11604"/>
        <dbReference type="ChEBI" id="CHEBI:15378"/>
        <dbReference type="ChEBI" id="CHEBI:29999"/>
        <dbReference type="ChEBI" id="CHEBI:30616"/>
        <dbReference type="ChEBI" id="CHEBI:83421"/>
        <dbReference type="ChEBI" id="CHEBI:456216"/>
        <dbReference type="EC" id="2.7.11.1"/>
    </reaction>
</comment>
<comment type="catalytic activity">
    <reaction evidence="6 7 8 11 18">
        <text>L-threonyl-[protein] + ATP = O-phospho-L-threonyl-[protein] + ADP + H(+)</text>
        <dbReference type="Rhea" id="RHEA:46608"/>
        <dbReference type="Rhea" id="RHEA-COMP:11060"/>
        <dbReference type="Rhea" id="RHEA-COMP:11605"/>
        <dbReference type="ChEBI" id="CHEBI:15378"/>
        <dbReference type="ChEBI" id="CHEBI:30013"/>
        <dbReference type="ChEBI" id="CHEBI:30616"/>
        <dbReference type="ChEBI" id="CHEBI:61977"/>
        <dbReference type="ChEBI" id="CHEBI:456216"/>
        <dbReference type="EC" id="2.7.11.1"/>
    </reaction>
</comment>
<comment type="cofactor">
    <cofactor evidence="6 11">
        <name>Mg(2+)</name>
        <dbReference type="ChEBI" id="CHEBI:18420"/>
    </cofactor>
</comment>
<comment type="activity regulation">
    <text evidence="6 7 17 18 19 20 21">Activated in response to hyperosmotic stress: cell shrinkage promotes formation of a membraneless compartment that concentrates WNK1 with its substrates, OXSR1/OSR1 and STK39/SPAK (PubMed:10828064, PubMed:36318922). Activation requires autophosphorylation of Ser-382 and, to a lower extent, Ser-378 (PubMed:12374799, PubMed:22544747, PubMed:24803536). Autophosphorylation and subsequent activation is inhibited by increases in intracellular ionic strength: Cl(-) potently inhibits WNK1 kinase activity via direct binding (PubMed:24803536). Also inhibited by K(+) ions (PubMed:33439774). Inhibited by Compound 12 ((5-Chloro-2-(2-((methyl-d3)amino)thiazol-4-yl)- pyridin-4-yl)(4-(4-chlorobenzyl)piperazin-1-yl)methanone) (PubMed:28771350).</text>
</comment>
<comment type="subunit">
    <text evidence="3 9 15">Interacts with WNK3 (PubMed:17975670). Interacts with WNK4; inhibiting the activity of WNK4 (PubMed:17975670). Interacts with SGK1; promoting its activation (PubMed:16006511). Associates with the mTORC2 complex (By similarity). Interacts with UVRAG (By similarity). Interacts (via amphipathic alpha-helix region) with EMC2; promoting the ER membrane protein complex assembly (By similarity).</text>
</comment>
<comment type="subunit">
    <molecule>Isoform 5</molecule>
    <text evidence="12">Interacts with isoform 1; inhibiting isoform 1 activity.</text>
</comment>
<comment type="interaction">
    <interactant intactId="EBI-457953">
        <id>Q9JIH7</id>
    </interactant>
    <interactant intactId="EBI-458017">
        <id>P29101</id>
        <label>Syt2</label>
    </interactant>
    <organismsDiffer>false</organismsDiffer>
    <experiments>9</experiments>
</comment>
<comment type="subcellular location">
    <subcellularLocation>
        <location evidence="6 21">Cytoplasm</location>
    </subcellularLocation>
    <subcellularLocation>
        <location evidence="3">Nucleus</location>
    </subcellularLocation>
    <subcellularLocation>
        <location evidence="3">Cytoplasm</location>
        <location evidence="3">Cytoskeleton</location>
        <location evidence="3">Spindle</location>
    </subcellularLocation>
    <text evidence="3 21">Mediates formation and localizes to cytoplasmic membraneless compartment in response to hyperosmotic stress (PubMed:36318922). Also localizes to the nucleus (By similarity). Localizes to the mitotic spindle during mitosis (By similarity).</text>
</comment>
<comment type="alternative products">
    <event type="alternative splicing"/>
    <isoform>
        <id>Q9JIH7-1</id>
        <name>1</name>
        <sequence type="displayed"/>
    </isoform>
    <isoform>
        <id>Q9JIH7-3</id>
        <name>2</name>
        <name>Brain and spinal cord variant</name>
        <sequence type="described" ref="VSP_040279"/>
    </isoform>
    <isoform>
        <id>Q9JIH7-2</id>
        <name>3</name>
        <name>Dorsal root ganglia and sciatic nerve variant</name>
        <name>DRG and sciatic nerve variant</name>
        <sequence type="described" ref="VSP_040278 VSP_040280"/>
    </isoform>
    <isoform>
        <id>Q9JIH7-4</id>
        <name>4</name>
        <name>KS-WNK1-long</name>
        <name evidence="24">Kidney-Specific long form</name>
        <sequence type="described" ref="VSP_058594 VSP_058596"/>
    </isoform>
    <isoform>
        <id>Q9JIH7-5</id>
        <name>5</name>
        <name>KS-WNK1-short</name>
        <name evidence="24">Kidney-Specific short form</name>
        <sequence type="described" ref="VSP_058595 VSP_058596"/>
    </isoform>
</comment>
<comment type="domain">
    <text evidence="3">The RFXV motifs mediate recognition with downstream kinases OXSR1/OSR1 and STK39/SPAK.</text>
</comment>
<comment type="domain">
    <text evidence="21">Disordered regions undergo liquid-liquid phase separation (LLPS) for the formation of a cytoplasmic membraneless compartment that concentrates WNK1 with its substrates, OXSR1/OSR1 and STK39/SPAK.</text>
</comment>
<comment type="PTM">
    <text evidence="7 10 17 18">Autophosphorylated at Ser-378 and Ser-382, promoting its activity (PubMed:12374799, PubMed:22544747, PubMed:24803536). Autophosphorylation at Ser-382 is inhibited by intracellular calcium (PubMed:24803536). Phosphorylation at Thr-58 increases ability to activate SGK1 (PubMed:16081417).</text>
</comment>
<comment type="PTM">
    <text evidence="3">Ubiquitinated by the BCR(KLHL3) complex, leading to its degradation (By similarity). Also ubiquitinated by the BCR(KLHL2) complex (By similarity).</text>
</comment>
<comment type="PTM">
    <text evidence="3">May be O-glycosylated.</text>
</comment>
<comment type="miscellaneous">
    <molecule>Isoform 2</molecule>
    <text evidence="25">This isoform which includes the HSN2 exon has been identified in human and mouse. The sequence shown here is the result of gene prediction.</text>
</comment>
<comment type="miscellaneous">
    <molecule>Isoform 3</molecule>
    <text evidence="25">This isoform which includes the HSN2 exon has been identified in human and mouse. The sequence shown here is the result of gene prediction.</text>
</comment>
<comment type="similarity">
    <text evidence="4">Belongs to the protein kinase superfamily. Ser/Thr protein kinase family. WNK subfamily.</text>
</comment>
<comment type="caution">
    <text evidence="26 27">Was named WNK/'with no lysine(K)' because key residues for catalysis, including the lysine involved in ATP binding, are either not conserved or differ compared to the residues described in other kinase family proteins.</text>
</comment>
<comment type="caution">
    <text evidence="25">HSN2 was originally thought to be an intronless gene lying within a WNK1 gene intron. It has been shown to be an alternative exon of the WNK1 gene in other mammalian species, including human and mouse. Isoforms bearing this exon (isoform 2 and isoform 3 in this entry) are specifically expressed in the nervous system in these species. system.</text>
</comment>
<comment type="sequence caution" evidence="25">
    <conflict type="erroneous gene model prediction">
        <sequence resource="EMBL-CDS" id="DAA04492"/>
    </conflict>
    <text>Includes 3' and 3' intronic sequences.</text>
</comment>
<sequence length="2126" mass="225112">MSDGTAEKQSGTPGFLSPPAPVPKNGSSSDSSVGEKLGAAVADSGIGRTEEYRRRRHTMDKDSRGAAATTTPTEHRFFRRSVICDSNATALELPGLPLSIPQPSVPAVVPQSAPPEPHREETLTATVASQVSQQPSAAASPGEQAVVGSATATVPSSTSKDRPVSQPSLVGSKEEPPPSRSGSGSGGASAKEPQEERNQQQDDIEELETKAVGMSNDGRFLKFDIEIGRGSFKTVYKGLDTETTVEVAWCELQDRKLTKSERQRFKEEAEMLKGLQHPNIVRFYDSWESTVKGKKCIVLVTELMTSGTLKTYLKRFKVMKIKVLRSWCRQILKGLQFLHTRTPPIIHRDLKCDNIFITGPTGSVKIGDLGLATLKRASFAKSVIGTPEFMAPEMYEEKYDESVDVYAFGMCMLEMATSEYPYSECQNAAQIYRRVTSGVKPASFDKVAIPEVKEIIEGCIRQNKDERYSIKDLLNHAFFQEETGVRVELAEEDDGEKIAIKLWLRIEDIKKLKGKYKDNEAIEFSFDLERDVPEDVAQEMVESGYVCEGDHKTMAKAIKDRVSLIKRKREQRQLVREEQEKRKQEESSFKQQNEQQASVSQAGIQPLSVASTGIPTAPTTSASVSTQVEPEEPEADQHQQLQYQQPSISVLSDGTVDSGQGSSVFTESRVSSQQTVSYGSQHEQAHSIGTAPGHTVSSIQAQSQPHGVYPPSSMAQGQNQGQPSSSLAGVLSSQPVQHPQQQGIQPTVPPQQAVQYSLPQAASSSEGTVQPVSQPQVSAGTQSSTQGVSQAAPPEQTPITQSQPTQPVPLVSSVDSAHSDVASGMSDGNENAPSSSGRHEGRTTKRHYRKSVRSRSRHEKTSRPKLRILNVSNKGDRVVECQLETHNRKMVTFKFDLDGDNPEEIATIMVNNDFILAIERESFVAQVREIIEKADEMLSEDVSVEPEGDQGLESLQGKDDYGFPGSQKLEGEFKQPIAVSSMPQQIGVPTSSLTQVVHSAGRRFIVSPVPESRLRESKIFTSEIPDPVAASTSQGPGMNLSHSASSLSLQQAFSELKHGQMTEGPNTAPPNFNHPGPTFSPFLTSIAGVQTVAASTPSVSVPITSSPLNDISTSVMQSEGALPTDKGIGGVTTSTGVVASGGLTTLSVSETPTLSSAVSSSTAPAVVTVSTTSQPVQASTSGSIASSTGSFPSGTFSTTTGTTVSSVAVPNAKPPTVLLQQVAGNTAGVAIVTSVSTTTPFPAMASQPSLPLGSSTSAPTLAETVVVSAHSLDKASHSSTAGLGLSFCAPSSSSSSGTAVSSSVSQPGIVHPLVISSAIASTPVLPQPAVPTSTPLLPQVPNIPPLVQPVANVPAVQQTLIHSQPQPALLPNQPHTHCPEMDADTQSKAPGIDDIKTLEEKLRSLFSEHSSSGTQHASVSLETPLVVETVTPGIPTTAVAPSKLMTSTTSTCLPPTNLPLGTAGMPVMPVGTPGQVSTPGTHASAPASTATGAKPGTTPPKPSLTKTVVPPVGTELSAGTVPCEQLPPFPGPSLIQTQQPLEDLDAQLRRTLSPETIPVTPAVGPLSTMSSTAVTEAGSQPQKDGTEVHVTASSSGAGVVKMGRFQVSVTMDDAQKERKNRSEDTKSVHFESSTSESSVLSSSSPESTLVKPEPNGITVSGISLDVPDSTHRTPTPEAKSETGQPTKVGRFQVTTTANKVGRFSVSRTEDKVTELKKEGPVTSPFRDSEQTVIPAAIPKKEKPELAEPSHLNGPSSDLEAAFLSRGGEDGSGSPHSPPHLCSKSLPIQTLSQSLSNSFNSSYMSSDNESDIEDEDLRLELRRLREKHLKEIQDLQSRQKHEIESLYTKLGKVPPAVIIPPAAPLSGRRRRPTKSKGSKSSRSSSLGNKSPQLSGNLSGQSGTSVLNPQQTLHPPGNTPETGHNQLLQPLKPSPSSDNLYSAFTSDGAISVPSLSAPGQGTSSTNTVGGTVSSQAAQAQPPAMTSSRKGTFTDDLHKLVDNWARDAMNLSGRRGSKGHMNYEGPGMARKFSAPGQLCISMTSNMGGSTPISAASATSLGHFTKSMCPPQQYGFPAAPFGTQWSGTGGPAPQPLGQFQPVGTTSLQNFNISNLQKSISNPPGSNLRTT</sequence>
<reference evidence="25" key="1">
    <citation type="journal article" date="2000" name="J. Biol. Chem.">
        <title>WNK1, a novel mammalian serine/threonine protein kinase lacking the catalytic lysine in subdomain II.</title>
        <authorList>
            <person name="Xu B.-E."/>
            <person name="English J.M."/>
            <person name="Wilsbacher J.L."/>
            <person name="Stippec S."/>
            <person name="Goldsmith E.J."/>
            <person name="Cobb M.H."/>
        </authorList>
    </citation>
    <scope>NUCLEOTIDE SEQUENCE [MRNA] (ISOFORM 1)</scope>
    <scope>FUNCTION</scope>
    <scope>CATALYTIC ACTIVITY</scope>
    <scope>COFACTOR</scope>
    <scope>ACTIVITY REGULATION</scope>
    <scope>SUBCELLULAR LOCATION</scope>
    <scope>CAUTION</scope>
    <scope>ACTIVE SITE</scope>
    <scope>MUTAGENESIS OF LYS-233; CYS-250; LYS-256; LYS-259 AND ASP-368</scope>
</reference>
<reference key="2">
    <citation type="journal article" date="2006" name="Am. J. Physiol.">
        <title>Dominant-negative regulation of WNK1 by its kidney-specific kinase-defective isoform.</title>
        <authorList>
            <person name="Subramanya A.R."/>
            <person name="Yang C.L."/>
            <person name="Zhu X."/>
            <person name="Ellison D.H."/>
        </authorList>
    </citation>
    <scope>NUCLEOTIDE SEQUENCE [MRNA] (ISOFORMS 4 AND 5)</scope>
    <scope>ALTERNATIVE SPLICING</scope>
    <scope>FUNCTION (ISOFORM 5)</scope>
    <scope>SUBUNIT (ISOFORM 5)</scope>
</reference>
<reference key="3">
    <citation type="journal article" date="2004" name="Nature">
        <title>Genome sequence of the Brown Norway rat yields insights into mammalian evolution.</title>
        <authorList>
            <person name="Gibbs R.A."/>
            <person name="Weinstock G.M."/>
            <person name="Metzker M.L."/>
            <person name="Muzny D.M."/>
            <person name="Sodergren E.J."/>
            <person name="Scherer S."/>
            <person name="Scott G."/>
            <person name="Steffen D."/>
            <person name="Worley K.C."/>
            <person name="Burch P.E."/>
            <person name="Okwuonu G."/>
            <person name="Hines S."/>
            <person name="Lewis L."/>
            <person name="Deramo C."/>
            <person name="Delgado O."/>
            <person name="Dugan-Rocha S."/>
            <person name="Miner G."/>
            <person name="Morgan M."/>
            <person name="Hawes A."/>
            <person name="Gill R."/>
            <person name="Holt R.A."/>
            <person name="Adams M.D."/>
            <person name="Amanatides P.G."/>
            <person name="Baden-Tillson H."/>
            <person name="Barnstead M."/>
            <person name="Chin S."/>
            <person name="Evans C.A."/>
            <person name="Ferriera S."/>
            <person name="Fosler C."/>
            <person name="Glodek A."/>
            <person name="Gu Z."/>
            <person name="Jennings D."/>
            <person name="Kraft C.L."/>
            <person name="Nguyen T."/>
            <person name="Pfannkoch C.M."/>
            <person name="Sitter C."/>
            <person name="Sutton G.G."/>
            <person name="Venter J.C."/>
            <person name="Woodage T."/>
            <person name="Smith D."/>
            <person name="Lee H.-M."/>
            <person name="Gustafson E."/>
            <person name="Cahill P."/>
            <person name="Kana A."/>
            <person name="Doucette-Stamm L."/>
            <person name="Weinstock K."/>
            <person name="Fechtel K."/>
            <person name="Weiss R.B."/>
            <person name="Dunn D.M."/>
            <person name="Green E.D."/>
            <person name="Blakesley R.W."/>
            <person name="Bouffard G.G."/>
            <person name="De Jong P.J."/>
            <person name="Osoegawa K."/>
            <person name="Zhu B."/>
            <person name="Marra M."/>
            <person name="Schein J."/>
            <person name="Bosdet I."/>
            <person name="Fjell C."/>
            <person name="Jones S."/>
            <person name="Krzywinski M."/>
            <person name="Mathewson C."/>
            <person name="Siddiqui A."/>
            <person name="Wye N."/>
            <person name="McPherson J."/>
            <person name="Zhao S."/>
            <person name="Fraser C.M."/>
            <person name="Shetty J."/>
            <person name="Shatsman S."/>
            <person name="Geer K."/>
            <person name="Chen Y."/>
            <person name="Abramzon S."/>
            <person name="Nierman W.C."/>
            <person name="Havlak P.H."/>
            <person name="Chen R."/>
            <person name="Durbin K.J."/>
            <person name="Egan A."/>
            <person name="Ren Y."/>
            <person name="Song X.-Z."/>
            <person name="Li B."/>
            <person name="Liu Y."/>
            <person name="Qin X."/>
            <person name="Cawley S."/>
            <person name="Cooney A.J."/>
            <person name="D'Souza L.M."/>
            <person name="Martin K."/>
            <person name="Wu J.Q."/>
            <person name="Gonzalez-Garay M.L."/>
            <person name="Jackson A.R."/>
            <person name="Kalafus K.J."/>
            <person name="McLeod M.P."/>
            <person name="Milosavljevic A."/>
            <person name="Virk D."/>
            <person name="Volkov A."/>
            <person name="Wheeler D.A."/>
            <person name="Zhang Z."/>
            <person name="Bailey J.A."/>
            <person name="Eichler E.E."/>
            <person name="Tuzun E."/>
            <person name="Birney E."/>
            <person name="Mongin E."/>
            <person name="Ureta-Vidal A."/>
            <person name="Woodwark C."/>
            <person name="Zdobnov E."/>
            <person name="Bork P."/>
            <person name="Suyama M."/>
            <person name="Torrents D."/>
            <person name="Alexandersson M."/>
            <person name="Trask B.J."/>
            <person name="Young J.M."/>
            <person name="Huang H."/>
            <person name="Wang H."/>
            <person name="Xing H."/>
            <person name="Daniels S."/>
            <person name="Gietzen D."/>
            <person name="Schmidt J."/>
            <person name="Stevens K."/>
            <person name="Vitt U."/>
            <person name="Wingrove J."/>
            <person name="Camara F."/>
            <person name="Mar Alba M."/>
            <person name="Abril J.F."/>
            <person name="Guigo R."/>
            <person name="Smit A."/>
            <person name="Dubchak I."/>
            <person name="Rubin E.M."/>
            <person name="Couronne O."/>
            <person name="Poliakov A."/>
            <person name="Huebner N."/>
            <person name="Ganten D."/>
            <person name="Goesele C."/>
            <person name="Hummel O."/>
            <person name="Kreitler T."/>
            <person name="Lee Y.-A."/>
            <person name="Monti J."/>
            <person name="Schulz H."/>
            <person name="Zimdahl H."/>
            <person name="Himmelbauer H."/>
            <person name="Lehrach H."/>
            <person name="Jacob H.J."/>
            <person name="Bromberg S."/>
            <person name="Gullings-Handley J."/>
            <person name="Jensen-Seaman M.I."/>
            <person name="Kwitek A.E."/>
            <person name="Lazar J."/>
            <person name="Pasko D."/>
            <person name="Tonellato P.J."/>
            <person name="Twigger S."/>
            <person name="Ponting C.P."/>
            <person name="Duarte J.M."/>
            <person name="Rice S."/>
            <person name="Goodstadt L."/>
            <person name="Beatson S.A."/>
            <person name="Emes R.D."/>
            <person name="Winter E.E."/>
            <person name="Webber C."/>
            <person name="Brandt P."/>
            <person name="Nyakatura G."/>
            <person name="Adetobi M."/>
            <person name="Chiaromonte F."/>
            <person name="Elnitski L."/>
            <person name="Eswara P."/>
            <person name="Hardison R.C."/>
            <person name="Hou M."/>
            <person name="Kolbe D."/>
            <person name="Makova K."/>
            <person name="Miller W."/>
            <person name="Nekrutenko A."/>
            <person name="Riemer C."/>
            <person name="Schwartz S."/>
            <person name="Taylor J."/>
            <person name="Yang S."/>
            <person name="Zhang Y."/>
            <person name="Lindpaintner K."/>
            <person name="Andrews T.D."/>
            <person name="Caccamo M."/>
            <person name="Clamp M."/>
            <person name="Clarke L."/>
            <person name="Curwen V."/>
            <person name="Durbin R.M."/>
            <person name="Eyras E."/>
            <person name="Searle S.M."/>
            <person name="Cooper G.M."/>
            <person name="Batzoglou S."/>
            <person name="Brudno M."/>
            <person name="Sidow A."/>
            <person name="Stone E.A."/>
            <person name="Payseur B.A."/>
            <person name="Bourque G."/>
            <person name="Lopez-Otin C."/>
            <person name="Puente X.S."/>
            <person name="Chakrabarti K."/>
            <person name="Chatterji S."/>
            <person name="Dewey C."/>
            <person name="Pachter L."/>
            <person name="Bray N."/>
            <person name="Yap V.B."/>
            <person name="Caspi A."/>
            <person name="Tesler G."/>
            <person name="Pevzner P.A."/>
            <person name="Haussler D."/>
            <person name="Roskin K.M."/>
            <person name="Baertsch R."/>
            <person name="Clawson H."/>
            <person name="Furey T.S."/>
            <person name="Hinrichs A.S."/>
            <person name="Karolchik D."/>
            <person name="Kent W.J."/>
            <person name="Rosenbloom K.R."/>
            <person name="Trumbower H."/>
            <person name="Weirauch M."/>
            <person name="Cooper D.N."/>
            <person name="Stenson P.D."/>
            <person name="Ma B."/>
            <person name="Brent M."/>
            <person name="Arumugam M."/>
            <person name="Shteynberg D."/>
            <person name="Copley R.R."/>
            <person name="Taylor M.S."/>
            <person name="Riethman H."/>
            <person name="Mudunuri U."/>
            <person name="Peterson J."/>
            <person name="Guyer M."/>
            <person name="Felsenfeld A."/>
            <person name="Old S."/>
            <person name="Mockrin S."/>
            <person name="Collins F.S."/>
        </authorList>
    </citation>
    <scope>NUCLEOTIDE SEQUENCE [LARGE SCALE GENOMIC DNA] OF 312-2126</scope>
    <source>
        <strain>Brown Norway</strain>
    </source>
</reference>
<reference key="4">
    <citation type="journal article" date="2004" name="Am. J. Hum. Genet.">
        <title>Identification of a novel gene (HSN2) causing hereditary sensory and autonomic neuropathy type II through the study of Canadian genetic isolates.</title>
        <authorList>
            <person name="Lafreniere R.G."/>
            <person name="MacDonald M.L.E."/>
            <person name="Dube M.-P."/>
            <person name="MacFarlane J."/>
            <person name="O'Driscoll M."/>
            <person name="Brais B."/>
            <person name="Meilleur S."/>
            <person name="Brinkman R.R."/>
            <person name="Dadivas O."/>
            <person name="Pape T."/>
            <person name="Platon C."/>
            <person name="Radomski C."/>
            <person name="Risler J."/>
            <person name="Thompson J."/>
            <person name="Guerra-Escobio A.-M."/>
            <person name="Davar G."/>
            <person name="Breakefield X.O."/>
            <person name="Pimstone S.N."/>
            <person name="Green R."/>
            <person name="Pryse-Phillips W."/>
            <person name="Goldberg Y.P."/>
            <person name="Younghusband H.B."/>
            <person name="Hayden M.R."/>
            <person name="Sherrington R."/>
            <person name="Rouleau G.A."/>
            <person name="Samuels M.E."/>
        </authorList>
    </citation>
    <scope>IDENTIFICATION OF THE HSN2 EXON</scope>
</reference>
<reference key="5">
    <citation type="journal article" date="2002" name="J. Biol. Chem.">
        <title>Regulation of WNK1 by an autoinhibitory domain and autophosphorylation.</title>
        <authorList>
            <person name="Xu B.-E."/>
            <person name="Min X."/>
            <person name="Stippec S."/>
            <person name="Lee B.H."/>
            <person name="Goldsmith E.J."/>
            <person name="Cobb M.H."/>
        </authorList>
    </citation>
    <scope>FUNCTION</scope>
    <scope>CATALYTIC ACTIVITY</scope>
    <scope>ACTIVITY REGULATION</scope>
    <scope>CAUTION</scope>
    <scope>PHOSPHORYLATION AT SER-378 AND SER-382</scope>
    <scope>REGION</scope>
    <scope>MUTAGENESIS OF LYS-233; CYS-250; SER-378; SER-382; PHE-524 AND PHE-526</scope>
</reference>
<reference key="6">
    <citation type="journal article" date="2004" name="Mol. Cell">
        <title>WNK1 phosphorylates synaptotagmin 2 and modulates its membrane binding.</title>
        <authorList>
            <person name="Lee B.H."/>
            <person name="Min X."/>
            <person name="Heise C.J."/>
            <person name="Xu B.E."/>
            <person name="Chen S."/>
            <person name="Shu H."/>
            <person name="Luby-Phelps K."/>
            <person name="Goldsmith E.J."/>
            <person name="Cobb M.H."/>
        </authorList>
    </citation>
    <scope>FUNCTION</scope>
    <scope>CATALYTIC ACTIVITY</scope>
</reference>
<reference key="7">
    <citation type="journal article" date="2005" name="Biochem. J.">
        <title>The WNK1 and WNK4 protein kinases that are mutated in Gordon's hypertension syndrome phosphorylate and activate SPAK and OSR1 protein kinases.</title>
        <authorList>
            <person name="Vitari A.C."/>
            <person name="Deak M."/>
            <person name="Morrice N.A."/>
            <person name="Alessi D.R."/>
        </authorList>
    </citation>
    <scope>FUNCTION</scope>
    <scope>CATALYTIC ACTIVITY</scope>
    <scope>ACTIVE SITE</scope>
    <scope>MUTAGENESIS OF ASP-368</scope>
</reference>
<reference key="8">
    <citation type="journal article" date="2005" name="J. Biol. Chem.">
        <title>WNK1 activates SGK1 by a phosphatidylinositol 3-kinase-dependent and non-catalytic mechanism.</title>
        <authorList>
            <person name="Xu B.E."/>
            <person name="Stippec S."/>
            <person name="Lazrak A."/>
            <person name="Huang C.L."/>
            <person name="Cobb M.H."/>
        </authorList>
    </citation>
    <scope>FUNCTION</scope>
    <scope>PHOSPHORYLATION AT THR-58</scope>
    <scope>MUTAGENESIS OF THR-58</scope>
</reference>
<reference key="9">
    <citation type="journal article" date="2005" name="Proc. Natl. Acad. Sci. U.S.A.">
        <title>WNK1 activates SGK1 to regulate the epithelial sodium channel.</title>
        <authorList>
            <person name="Xu B.E."/>
            <person name="Stippec S."/>
            <person name="Chu P.Y."/>
            <person name="Lazrak A."/>
            <person name="Li X.J."/>
            <person name="Lee B.H."/>
            <person name="English J.M."/>
            <person name="Ortega B."/>
            <person name="Huang C.L."/>
            <person name="Cobb M.H."/>
        </authorList>
    </citation>
    <scope>FUNCTION</scope>
    <scope>INTERACTION WITH SGK1</scope>
</reference>
<reference key="10">
    <citation type="journal article" date="2007" name="J. Clin. Invest.">
        <title>The thiazide-sensitive Na-Cl cotransporter is regulated by a WNK kinase signaling complex.</title>
        <authorList>
            <person name="Yang C.L."/>
            <person name="Zhu X."/>
            <person name="Ellison D.H."/>
        </authorList>
    </citation>
    <scope>FUNCTION</scope>
    <scope>INTERACTION WITH WNK3 AND WNK4</scope>
</reference>
<reference key="11">
    <citation type="journal article" date="2006" name="Am. J. Physiol.">
        <title>WNK kinases influence TRPV4 channel function and localization.</title>
        <authorList>
            <person name="Fu Y."/>
            <person name="Subramanya A."/>
            <person name="Rozansky D."/>
            <person name="Cohen D.M."/>
        </authorList>
    </citation>
    <scope>FUNCTION</scope>
    <scope>MUTAGENESIS OF LYS-233 AND SER-382</scope>
</reference>
<reference key="12">
    <citation type="journal article" date="2007" name="J. Physiol. (Lond.)">
        <title>SLC26A9 is a Cl(-) channel regulated by the WNK kinases.</title>
        <authorList>
            <person name="Dorwart M.R."/>
            <person name="Shcheynikov N."/>
            <person name="Wang Y."/>
            <person name="Stippec S."/>
            <person name="Muallem S."/>
        </authorList>
    </citation>
    <scope>FUNCTION</scope>
</reference>
<reference key="13">
    <citation type="journal article" date="2010" name="J. Biol. Chem.">
        <title>Serum and glucocorticoid-induced kinase (SGK) 1 and the epithelial sodium channel are regulated by multiple with no lysine (WNK) family members.</title>
        <authorList>
            <person name="Heise C.J."/>
            <person name="Xu B.E."/>
            <person name="Deaton S.L."/>
            <person name="Cha S.K."/>
            <person name="Cheng C.J."/>
            <person name="Earnest S."/>
            <person name="Sengupta S."/>
            <person name="Juang Y.C."/>
            <person name="Stippec S."/>
            <person name="Xu Y."/>
            <person name="Zhao Y."/>
            <person name="Huang C.L."/>
            <person name="Cobb M.H."/>
        </authorList>
    </citation>
    <scope>FUNCTION</scope>
</reference>
<reference key="14">
    <citation type="journal article" date="2012" name="J. Biol. Chem.">
        <title>Taurine inhibits K+-Cl- cotransporter KCC2 to regulate embryonic Cl- homeostasis via with-no-lysine (WNK) protein kinase signaling pathway.</title>
        <authorList>
            <person name="Inoue K."/>
            <person name="Furukawa T."/>
            <person name="Kumada T."/>
            <person name="Yamada J."/>
            <person name="Wang T."/>
            <person name="Inoue R."/>
            <person name="Fukuda A."/>
        </authorList>
    </citation>
    <scope>FUNCTION</scope>
    <scope>ACTIVITY REGULATION</scope>
    <scope>PHOSPHORYLATION AT SER-382</scope>
    <scope>MUTAGENESIS OF SER-382</scope>
</reference>
<reference key="15">
    <citation type="journal article" date="2012" name="Nat. Commun.">
        <title>Quantitative maps of protein phosphorylation sites across 14 different rat organs and tissues.</title>
        <authorList>
            <person name="Lundby A."/>
            <person name="Secher A."/>
            <person name="Lage K."/>
            <person name="Nordsborg N.B."/>
            <person name="Dmytriyev A."/>
            <person name="Lundby C."/>
            <person name="Olsen J.V."/>
        </authorList>
    </citation>
    <scope>PHOSPHORYLATION [LARGE SCALE ANALYSIS] AT SER-165; SER-172; SER-1773 AND SER-1776</scope>
    <scope>IDENTIFICATION BY MASS SPECTROMETRY [LARGE SCALE ANALYSIS]</scope>
</reference>
<reference key="16">
    <citation type="journal article" date="2017" name="J. Med. Chem.">
        <title>Optimization of allosteric With-No-Lysine (WNK) kinase inhibitors and efficacy in rodent hypertension models.</title>
        <authorList>
            <person name="Yamada K."/>
            <person name="Levell J."/>
            <person name="Yoon T."/>
            <person name="Kohls D."/>
            <person name="Yowe D."/>
            <person name="Rigel D.F."/>
            <person name="Imase H."/>
            <person name="Yuan J."/>
            <person name="Yasoshima K."/>
            <person name="DiPetrillo K."/>
            <person name="Monovich L."/>
            <person name="Xu L."/>
            <person name="Zhu M."/>
            <person name="Kato M."/>
            <person name="Jain M."/>
            <person name="Idamakanti N."/>
            <person name="Taslimi P."/>
            <person name="Kawanami T."/>
            <person name="Argikar U.A."/>
            <person name="Kunjathoor V."/>
            <person name="Xie X."/>
            <person name="Yagi Y.I."/>
            <person name="Iwaki Y."/>
            <person name="Robinson Z."/>
            <person name="Park H.M."/>
        </authorList>
    </citation>
    <scope>ACTIVITY REGULATION</scope>
</reference>
<reference key="17">
    <citation type="journal article" date="2021" name="Am. J. Physiol.">
        <title>WNKs are potassium-sensitive kinases.</title>
        <authorList>
            <person name="Pleinis J.M."/>
            <person name="Norrell L."/>
            <person name="Akella R."/>
            <person name="Humphreys J.M."/>
            <person name="He H."/>
            <person name="Sun Q."/>
            <person name="Zhang F."/>
            <person name="Sosa-Pagan J."/>
            <person name="Morrison D.E."/>
            <person name="Schellinger J.N."/>
            <person name="Jackson L.K."/>
            <person name="Goldsmith E.J."/>
            <person name="Rodan A.R."/>
        </authorList>
    </citation>
    <scope>ACTIVITY REGULATION</scope>
</reference>
<reference key="18">
    <citation type="journal article" date="2022" name="Cell">
        <title>WNK kinases sense molecular crowding and rescue cell volume via phase separation.</title>
        <authorList>
            <person name="Boyd-Shiwarski C.R."/>
            <person name="Shiwarski D.J."/>
            <person name="Griffiths S.E."/>
            <person name="Beacham R.T."/>
            <person name="Norrell L."/>
            <person name="Morrison D.E."/>
            <person name="Wang J."/>
            <person name="Mann J."/>
            <person name="Tennant W."/>
            <person name="Anderson E.N."/>
            <person name="Franks J."/>
            <person name="Calderon M."/>
            <person name="Connolly K.A."/>
            <person name="Cheema M.U."/>
            <person name="Weaver C.J."/>
            <person name="Nkashama L.J."/>
            <person name="Weckerly C.C."/>
            <person name="Querry K.E."/>
            <person name="Pandey U.B."/>
            <person name="Donnelly C.J."/>
            <person name="Sun D."/>
            <person name="Rodan A.R."/>
            <person name="Subramanya A.R."/>
        </authorList>
    </citation>
    <scope>FUNCTION</scope>
    <scope>ACTIVITY REGULATION</scope>
    <scope>SUBCELLULAR LOCATION</scope>
    <scope>DOMAIN</scope>
    <scope>MUTAGENESIS OF 568-LYS--VAL-599 AND 1820-LEU--GLN-1838</scope>
</reference>
<reference key="19">
    <citation type="journal article" date="2004" name="Structure">
        <title>Crystal structure of the kinase domain of WNK1, a kinase that causes a hereditary form of hypertension.</title>
        <authorList>
            <person name="Min X."/>
            <person name="Lee B.-H."/>
            <person name="Cobb M.H."/>
            <person name="Goldsmith E.J."/>
        </authorList>
    </citation>
    <scope>X-RAY CRYSTALLOGRAPHY (1.8 ANGSTROMS) OF 194-483 OF MUTANT ALA-382</scope>
</reference>
<reference key="20">
    <citation type="journal article" date="2013" name="J. Mol. Biol.">
        <title>Solution structure of the WNK1 autoinhibitory domain, a WNK-specific PF2 domain.</title>
        <authorList>
            <person name="Moon T.M."/>
            <person name="Correa F."/>
            <person name="Kinch L.N."/>
            <person name="Piala A.T."/>
            <person name="Gardner K.H."/>
            <person name="Goldsmith E.J."/>
        </authorList>
    </citation>
    <scope>STRUCTURE BY NMR OF 480-572</scope>
</reference>
<reference key="21">
    <citation type="journal article" date="2014" name="Sci. Signal.">
        <title>Chloride sensing by WNK1 involves inhibition of autophosphorylation.</title>
        <authorList>
            <person name="Piala A.T."/>
            <person name="Moon T.M."/>
            <person name="Akella R."/>
            <person name="He H."/>
            <person name="Cobb M.H."/>
            <person name="Goldsmith E.J."/>
        </authorList>
    </citation>
    <scope>X-RAY CRYSTALLOGRAPHY (3.50 ANGSTROMS) OF 194-480 OF MUTANT ALA-382 IN COMPLEX WITH BROMIDE</scope>
    <scope>FUNCTION</scope>
    <scope>CATALYTIC ACTIVITY</scope>
    <scope>ACTIVITY REGULATION</scope>
    <scope>PHOSPHORYLATION AT SER-382</scope>
    <scope>MUTAGENESIS OF LEU-299; LEU-369 AND LEU-371</scope>
</reference>
<reference key="22">
    <citation type="journal article" date="2016" name="Nat. Chem. Biol.">
        <title>Small-molecule WNK inhibition regulates cardiovascular and renal function.</title>
        <authorList>
            <person name="Yamada K."/>
            <person name="Park H.M."/>
            <person name="Rigel D.F."/>
            <person name="DiPetrillo K."/>
            <person name="Whalen E.J."/>
            <person name="Anisowicz A."/>
            <person name="Beil M."/>
            <person name="Berstler J."/>
            <person name="Brocklehurst C.E."/>
            <person name="Burdick D.A."/>
            <person name="Caplan S.L."/>
            <person name="Capparelli M.P."/>
            <person name="Chen G."/>
            <person name="Chen W."/>
            <person name="Dale B."/>
            <person name="Deng L."/>
            <person name="Fu F."/>
            <person name="Hamamatsu N."/>
            <person name="Harasaki K."/>
            <person name="Herr T."/>
            <person name="Hoffmann P."/>
            <person name="Hu Q.Y."/>
            <person name="Huang W.J."/>
            <person name="Idamakanti N."/>
            <person name="Imase H."/>
            <person name="Iwaki Y."/>
            <person name="Jain M."/>
            <person name="Jeyaseelan J."/>
            <person name="Kato M."/>
            <person name="Kaushik V.K."/>
            <person name="Kohls D."/>
            <person name="Kunjathoor V."/>
            <person name="LaSala D."/>
            <person name="Lee J."/>
            <person name="Liu J."/>
            <person name="Luo Y."/>
            <person name="Ma F."/>
            <person name="Mo R."/>
            <person name="Mowbray S."/>
            <person name="Mogi M."/>
            <person name="Ossola F."/>
            <person name="Pandey P."/>
            <person name="Patel S.J."/>
            <person name="Raghavan S."/>
            <person name="Salem B."/>
            <person name="Shanado Y.H."/>
            <person name="Trakshel G.M."/>
            <person name="Turner G."/>
            <person name="Wakai H."/>
            <person name="Wang C."/>
            <person name="Weldon S."/>
            <person name="Wielicki J.B."/>
            <person name="Xie X."/>
            <person name="Xu L."/>
            <person name="Yagi Y.I."/>
            <person name="Yasoshima K."/>
            <person name="Yin J."/>
            <person name="Yowe D."/>
            <person name="Zhang J.H."/>
            <person name="Zheng G."/>
            <person name="Monovich L."/>
        </authorList>
    </citation>
    <scope>X-RAY CRYSTALLOGRAPHY (1.65 ANGSTROMS) OF 194-483 OF MUTANT ALA-382 IN COMPLEX WITH INHIBITOR</scope>
</reference>